<protein>
    <recommendedName>
        <fullName>Chloride intracellular channel protein 6</fullName>
    </recommendedName>
    <alternativeName>
        <fullName>Glutaredoxin-like oxidoreductase CLIC6</fullName>
        <ecNumber evidence="5">1.8.-.-</ecNumber>
    </alternativeName>
    <alternativeName>
        <fullName>Parchorin</fullName>
    </alternativeName>
</protein>
<dbReference type="EC" id="1.8.-.-" evidence="5"/>
<dbReference type="EMBL" id="AB035520">
    <property type="protein sequence ID" value="BAA94345.1"/>
    <property type="molecule type" value="mRNA"/>
</dbReference>
<dbReference type="RefSeq" id="NP_001075473.1">
    <property type="nucleotide sequence ID" value="NM_001082004.1"/>
</dbReference>
<dbReference type="SMR" id="Q9N2G5"/>
<dbReference type="FunCoup" id="Q9N2G5">
    <property type="interactions" value="117"/>
</dbReference>
<dbReference type="GeneID" id="100008620"/>
<dbReference type="KEGG" id="ocu:100008620"/>
<dbReference type="CTD" id="54102"/>
<dbReference type="InParanoid" id="Q9N2G5"/>
<dbReference type="OrthoDB" id="1935530at2759"/>
<dbReference type="Proteomes" id="UP000001811">
    <property type="component" value="Unplaced"/>
</dbReference>
<dbReference type="GO" id="GO:0034707">
    <property type="term" value="C:chloride channel complex"/>
    <property type="evidence" value="ECO:0007669"/>
    <property type="project" value="UniProtKB-KW"/>
</dbReference>
<dbReference type="GO" id="GO:0005737">
    <property type="term" value="C:cytoplasm"/>
    <property type="evidence" value="ECO:0007669"/>
    <property type="project" value="UniProtKB-SubCell"/>
</dbReference>
<dbReference type="GO" id="GO:0005886">
    <property type="term" value="C:plasma membrane"/>
    <property type="evidence" value="ECO:0007669"/>
    <property type="project" value="UniProtKB-SubCell"/>
</dbReference>
<dbReference type="GO" id="GO:0005254">
    <property type="term" value="F:chloride channel activity"/>
    <property type="evidence" value="ECO:0000250"/>
    <property type="project" value="UniProtKB"/>
</dbReference>
<dbReference type="GO" id="GO:0031749">
    <property type="term" value="F:D2 dopamine receptor binding"/>
    <property type="evidence" value="ECO:0007669"/>
    <property type="project" value="TreeGrafter"/>
</dbReference>
<dbReference type="GO" id="GO:0031750">
    <property type="term" value="F:D3 dopamine receptor binding"/>
    <property type="evidence" value="ECO:0007669"/>
    <property type="project" value="TreeGrafter"/>
</dbReference>
<dbReference type="GO" id="GO:0031751">
    <property type="term" value="F:D4 dopamine receptor binding"/>
    <property type="evidence" value="ECO:0007669"/>
    <property type="project" value="TreeGrafter"/>
</dbReference>
<dbReference type="GO" id="GO:0016491">
    <property type="term" value="F:oxidoreductase activity"/>
    <property type="evidence" value="ECO:0007669"/>
    <property type="project" value="UniProtKB-KW"/>
</dbReference>
<dbReference type="CDD" id="cd03061">
    <property type="entry name" value="GST_N_CLIC"/>
    <property type="match status" value="1"/>
</dbReference>
<dbReference type="FunFam" id="1.20.1050.10:FF:000001">
    <property type="entry name" value="Chloride intracellular channel 2"/>
    <property type="match status" value="1"/>
</dbReference>
<dbReference type="FunFam" id="3.40.30.10:FF:000021">
    <property type="entry name" value="Chloride intracellular channel 4"/>
    <property type="match status" value="1"/>
</dbReference>
<dbReference type="Gene3D" id="1.20.1050.10">
    <property type="match status" value="1"/>
</dbReference>
<dbReference type="Gene3D" id="3.40.30.10">
    <property type="entry name" value="Glutaredoxin"/>
    <property type="match status" value="1"/>
</dbReference>
<dbReference type="InterPro" id="IPR002946">
    <property type="entry name" value="CLIC"/>
</dbReference>
<dbReference type="InterPro" id="IPR053823">
    <property type="entry name" value="CLIC_N"/>
</dbReference>
<dbReference type="InterPro" id="IPR010987">
    <property type="entry name" value="Glutathione-S-Trfase_C-like"/>
</dbReference>
<dbReference type="InterPro" id="IPR036282">
    <property type="entry name" value="Glutathione-S-Trfase_C_sf"/>
</dbReference>
<dbReference type="InterPro" id="IPR040079">
    <property type="entry name" value="Glutathione_S-Trfase"/>
</dbReference>
<dbReference type="InterPro" id="IPR036249">
    <property type="entry name" value="Thioredoxin-like_sf"/>
</dbReference>
<dbReference type="NCBIfam" id="TIGR00862">
    <property type="entry name" value="O-ClC"/>
    <property type="match status" value="1"/>
</dbReference>
<dbReference type="PANTHER" id="PTHR45476:SF1">
    <property type="entry name" value="CHLORIDE INTRACELLULAR CHANNEL PROTEIN 6"/>
    <property type="match status" value="1"/>
</dbReference>
<dbReference type="PANTHER" id="PTHR45476">
    <property type="entry name" value="CHLORIDE INTRACELLULAR CHANNEL PROTEIN 6-RELATED"/>
    <property type="match status" value="1"/>
</dbReference>
<dbReference type="Pfam" id="PF22441">
    <property type="entry name" value="CLIC-like_N"/>
    <property type="match status" value="1"/>
</dbReference>
<dbReference type="PRINTS" id="PR01263">
    <property type="entry name" value="INTCLCHANNEL"/>
</dbReference>
<dbReference type="SFLD" id="SFLDS00019">
    <property type="entry name" value="Glutathione_Transferase_(cytos"/>
    <property type="match status" value="1"/>
</dbReference>
<dbReference type="SFLD" id="SFLDG00358">
    <property type="entry name" value="Main_(cytGST)"/>
    <property type="match status" value="1"/>
</dbReference>
<dbReference type="SUPFAM" id="SSF47616">
    <property type="entry name" value="GST C-terminal domain-like"/>
    <property type="match status" value="1"/>
</dbReference>
<dbReference type="SUPFAM" id="SSF52833">
    <property type="entry name" value="Thioredoxin-like"/>
    <property type="match status" value="1"/>
</dbReference>
<dbReference type="PROSITE" id="PS50405">
    <property type="entry name" value="GST_CTER"/>
    <property type="match status" value="1"/>
</dbReference>
<gene>
    <name type="primary">CLIC6</name>
</gene>
<accession>Q9N2G5</accession>
<keyword id="KW-1003">Cell membrane</keyword>
<keyword id="KW-0868">Chloride</keyword>
<keyword id="KW-0869">Chloride channel</keyword>
<keyword id="KW-0963">Cytoplasm</keyword>
<keyword id="KW-0903">Direct protein sequencing</keyword>
<keyword id="KW-0407">Ion channel</keyword>
<keyword id="KW-0406">Ion transport</keyword>
<keyword id="KW-0472">Membrane</keyword>
<keyword id="KW-0560">Oxidoreductase</keyword>
<keyword id="KW-0597">Phosphoprotein</keyword>
<keyword id="KW-1185">Reference proteome</keyword>
<keyword id="KW-0677">Repeat</keyword>
<keyword id="KW-0812">Transmembrane</keyword>
<keyword id="KW-1133">Transmembrane helix</keyword>
<keyword id="KW-0813">Transport</keyword>
<keyword id="KW-0851">Voltage-gated channel</keyword>
<proteinExistence type="evidence at protein level"/>
<name>CLIC6_RABIT</name>
<sequence>MAETAEPEGGAPSPQGPPEGSALLEERPGEPDPAGPEASEGAAKAPSGEGAGAAAKAGATEEASGGRDGEGAGEQAPDAGTESGGETPDAKGAQIEAEGAPEGTKAPQLGEEGSGGKQVEESGPDCELRGEAAREAEGQAAAPAAPGAQEEAVPGDSVDAEGSIDAGGSVDAAGSVDAGGSIDAGGSMDAGGSVDAGGSIDTGGSVDAAGSVDAGGSIDTGRNVDAGGSIDAGGSVDAGGSMDAEGPAGGAHGAGGEPQDLGAGSPQPRSEAVEVAAAENEGHSPGESVEDAAAEEAAGTREPEGSEDAAGEDGDQGRPQEETEQQAERQEPGPETQSEEEERPPDRSPDGEAAASTRAAQPEAELSNHLAAEEGGQRGEGPANGRGEDGEASEEGDPGQEHDITLFVKAGYDGESIGNCPFSQRLFMILWLKGVIFNVTTVDLKRKPADLQNLAPGTNPPFMTFDGDVKTDVNKIEEFLEEKLAPPRYPKLATQHPESNSAGNDVFAKFSAFIKNTKKDANEIYEKSLLKALKKLDAYLNSPLPDEVDAYSTEDVAVSGRKFLDGDDLTLADCNLLPKLHIIKIVAKKYRDFEFPPEMTGIWRYLNNAYARDEFINTCPADQEIEHAYSDVAKRMK</sequence>
<evidence type="ECO:0000250" key="1"/>
<evidence type="ECO:0000250" key="2">
    <source>
        <dbReference type="UniProtKB" id="Q811Q2"/>
    </source>
</evidence>
<evidence type="ECO:0000250" key="3">
    <source>
        <dbReference type="UniProtKB" id="Q8BHB9"/>
    </source>
</evidence>
<evidence type="ECO:0000250" key="4">
    <source>
        <dbReference type="UniProtKB" id="Q96NY7"/>
    </source>
</evidence>
<evidence type="ECO:0000250" key="5">
    <source>
        <dbReference type="UniProtKB" id="Q9Y696"/>
    </source>
</evidence>
<evidence type="ECO:0000255" key="6"/>
<evidence type="ECO:0000255" key="7">
    <source>
        <dbReference type="PROSITE-ProRule" id="PRU00685"/>
    </source>
</evidence>
<evidence type="ECO:0000256" key="8">
    <source>
        <dbReference type="SAM" id="MobiDB-lite"/>
    </source>
</evidence>
<evidence type="ECO:0000269" key="9">
    <source>
    </source>
</evidence>
<evidence type="ECO:0000305" key="10"/>
<evidence type="ECO:0000305" key="11">
    <source>
    </source>
</evidence>
<reference key="1">
    <citation type="journal article" date="2000" name="J. Biol. Chem.">
        <title>Molecular cloning and characterization of a novel chloride intracellular channel-related protein, parchorin, expressed in water-secreting cells.</title>
        <authorList>
            <person name="Nishizawa T."/>
            <person name="Nagao T."/>
            <person name="Iwatsubo T."/>
            <person name="Forte J.G."/>
            <person name="Urushidani T."/>
        </authorList>
    </citation>
    <scope>NUCLEOTIDE SEQUENCE [MRNA]</scope>
    <scope>PROTEIN SEQUENCE OF 376-384; 410-419; 434-444; 492-502; 510-514; 536-544 AND 600-611</scope>
    <scope>CHARACTERIZATION</scope>
    <scope>FUNCTION</scope>
    <scope>TRANSPORTER ACTIVITY</scope>
    <scope>PHOSPHORYLATION</scope>
    <source>
        <tissue>Choroid plexus</tissue>
    </source>
</reference>
<organism>
    <name type="scientific">Oryctolagus cuniculus</name>
    <name type="common">Rabbit</name>
    <dbReference type="NCBI Taxonomy" id="9986"/>
    <lineage>
        <taxon>Eukaryota</taxon>
        <taxon>Metazoa</taxon>
        <taxon>Chordata</taxon>
        <taxon>Craniata</taxon>
        <taxon>Vertebrata</taxon>
        <taxon>Euteleostomi</taxon>
        <taxon>Mammalia</taxon>
        <taxon>Eutheria</taxon>
        <taxon>Euarchontoglires</taxon>
        <taxon>Glires</taxon>
        <taxon>Lagomorpha</taxon>
        <taxon>Leporidae</taxon>
        <taxon>Oryctolagus</taxon>
    </lineage>
</organism>
<comment type="function">
    <text evidence="4 5 9">In the soluble state, catalyzes glutaredoxin-like thiol disulfide exchange reactions with reduced glutathione as electron donor (By similarity). Can insert into membranes and form voltage-dependent chloride-selective channels. The channel opens upon membrane depolarization at positive voltages and closes at negative membrane voltages (By similarity). May play a critical role in water-secreting cells, possibly through the regulation of chloride ion transport (PubMed:10753923).</text>
</comment>
<comment type="catalytic activity">
    <reaction evidence="11">
        <text>chloride(in) = chloride(out)</text>
        <dbReference type="Rhea" id="RHEA:29823"/>
        <dbReference type="ChEBI" id="CHEBI:17996"/>
    </reaction>
</comment>
<comment type="activity regulation">
    <text evidence="4">Channel activity is redox- and pH-regulated. Inhibited by IAA-94.</text>
</comment>
<comment type="subunit">
    <text evidence="2 3">Monomer (soluble state) (By similarity). Interacts with dopamine receptors DRD2, DRD3 and DRD4 (By similarity).</text>
</comment>
<comment type="subcellular location">
    <subcellularLocation>
        <location>Cytoplasm</location>
    </subcellularLocation>
    <subcellularLocation>
        <location evidence="10">Cell membrane</location>
        <topology evidence="10">Single-pass membrane protein</topology>
    </subcellularLocation>
    <text>Predominantly cytoplasmic. Upon chloride ion efflux from the cell, it is translocated to the plasma membrane.</text>
</comment>
<comment type="tissue specificity">
    <text>Expressed in brain, chorioretinal, lacrimal glands, submandibular glands, airway epithelium, kidney and gastric mucosa, where it is preferentially expressed in cells that secrete or transport water. In brain, it is highly expressed in choroid plexus. Not detected in pancreas, adrenal glands, heart, skeletal muscle, ileal mucosa, liver and lung.</text>
</comment>
<comment type="domain">
    <text evidence="5">The active G-site contains a monothiol Cys-X-X-Ser motif which mediates glutathione-dependent redox catalysis.</text>
</comment>
<comment type="domain">
    <text evidence="1 5">Members of this family may change from a globular, soluble state to a state where the N-terminal domain is inserted into the membrane and functions as a chloride channel. The redox status of the active cysteine in Cys-X-X-Cys/Ser motif likely determines the capacity to adopt a soluble or membrane-inserted state. A conformation change of the N-terminal domain is thought to expose hydrophobic surfaces that trigger membrane insertion (By similarity).</text>
</comment>
<comment type="PTM">
    <text evidence="9">Phosphorylated.</text>
</comment>
<comment type="similarity">
    <text evidence="10">Belongs to the chloride channel CLIC family.</text>
</comment>
<feature type="chain" id="PRO_0000144219" description="Chloride intracellular channel protein 6">
    <location>
        <begin position="1"/>
        <end position="637"/>
    </location>
</feature>
<feature type="transmembrane region" description="Helical; Note=After insertion into the membrane" evidence="6">
    <location>
        <begin position="422"/>
        <end position="442"/>
    </location>
</feature>
<feature type="repeat" description="1">
    <location>
        <begin position="155"/>
        <end position="160"/>
    </location>
</feature>
<feature type="repeat" description="2">
    <location>
        <begin position="161"/>
        <end position="166"/>
    </location>
</feature>
<feature type="repeat" description="3">
    <location>
        <begin position="167"/>
        <end position="172"/>
    </location>
</feature>
<feature type="repeat" description="4">
    <location>
        <begin position="173"/>
        <end position="178"/>
    </location>
</feature>
<feature type="repeat" description="5">
    <location>
        <begin position="179"/>
        <end position="184"/>
    </location>
</feature>
<feature type="repeat" description="6">
    <location>
        <begin position="185"/>
        <end position="190"/>
    </location>
</feature>
<feature type="repeat" description="7">
    <location>
        <begin position="191"/>
        <end position="196"/>
    </location>
</feature>
<feature type="repeat" description="8">
    <location>
        <begin position="197"/>
        <end position="202"/>
    </location>
</feature>
<feature type="repeat" description="9">
    <location>
        <begin position="203"/>
        <end position="208"/>
    </location>
</feature>
<feature type="repeat" description="10">
    <location>
        <begin position="209"/>
        <end position="214"/>
    </location>
</feature>
<feature type="repeat" description="11">
    <location>
        <begin position="215"/>
        <end position="220"/>
    </location>
</feature>
<feature type="repeat" description="12">
    <location>
        <begin position="221"/>
        <end position="226"/>
    </location>
</feature>
<feature type="repeat" description="13">
    <location>
        <begin position="227"/>
        <end position="232"/>
    </location>
</feature>
<feature type="repeat" description="14">
    <location>
        <begin position="233"/>
        <end position="238"/>
    </location>
</feature>
<feature type="repeat" description="15">
    <location>
        <begin position="239"/>
        <end position="244"/>
    </location>
</feature>
<feature type="domain" description="GST C-terminal" evidence="7">
    <location>
        <begin position="466"/>
        <end position="637"/>
    </location>
</feature>
<feature type="region of interest" description="Disordered" evidence="8">
    <location>
        <begin position="1"/>
        <end position="400"/>
    </location>
</feature>
<feature type="region of interest" description="15 X 6 AA tandem repeat of [GEA]-[DGR]-[SN]-[VIM]-D-[AT]">
    <location>
        <begin position="155"/>
        <end position="244"/>
    </location>
</feature>
<feature type="short sequence motif" description="G-site" evidence="5">
    <location>
        <begin position="420"/>
        <end position="423"/>
    </location>
</feature>
<feature type="compositionally biased region" description="Low complexity" evidence="8">
    <location>
        <begin position="35"/>
        <end position="63"/>
    </location>
</feature>
<feature type="compositionally biased region" description="Basic and acidic residues" evidence="8">
    <location>
        <begin position="126"/>
        <end position="137"/>
    </location>
</feature>
<feature type="compositionally biased region" description="Low complexity" evidence="8">
    <location>
        <begin position="138"/>
        <end position="152"/>
    </location>
</feature>
<feature type="compositionally biased region" description="Gly residues" evidence="8">
    <location>
        <begin position="247"/>
        <end position="256"/>
    </location>
</feature>
<feature type="compositionally biased region" description="Acidic residues" evidence="8">
    <location>
        <begin position="305"/>
        <end position="314"/>
    </location>
</feature>
<feature type="compositionally biased region" description="Basic and acidic residues" evidence="8">
    <location>
        <begin position="315"/>
        <end position="332"/>
    </location>
</feature>
<feature type="modified residue" description="Phosphoserine" evidence="2">
    <location>
        <position position="39"/>
    </location>
</feature>
<feature type="modified residue" description="Phosphoserine" evidence="2">
    <location>
        <position position="348"/>
    </location>
</feature>
<feature type="modified residue" description="Phosphoserine" evidence="2">
    <location>
        <position position="393"/>
    </location>
</feature>